<reference key="1">
    <citation type="submission" date="2007-11" db="EMBL/GenBank/DDBJ databases">
        <title>Complete sequence of Delftia acidovorans DSM 14801 / SPH-1.</title>
        <authorList>
            <person name="Copeland A."/>
            <person name="Lucas S."/>
            <person name="Lapidus A."/>
            <person name="Barry K."/>
            <person name="Glavina del Rio T."/>
            <person name="Dalin E."/>
            <person name="Tice H."/>
            <person name="Pitluck S."/>
            <person name="Lowry S."/>
            <person name="Clum A."/>
            <person name="Schmutz J."/>
            <person name="Larimer F."/>
            <person name="Land M."/>
            <person name="Hauser L."/>
            <person name="Kyrpides N."/>
            <person name="Kim E."/>
            <person name="Schleheck D."/>
            <person name="Richardson P."/>
        </authorList>
    </citation>
    <scope>NUCLEOTIDE SEQUENCE [LARGE SCALE GENOMIC DNA]</scope>
    <source>
        <strain>DSM 14801 / SPH-1</strain>
    </source>
</reference>
<gene>
    <name evidence="1" type="primary">rpsO</name>
    <name type="ordered locus">Daci_5185</name>
</gene>
<accession>A9BNB9</accession>
<sequence length="88" mass="9906">MIASSVKAEVVKSNARSANDTGSPEVQVALLTARINELTPHFKQHAKDHHGRRGLLRMVSRRRKLLDYLKSKDADRYTALIAKLGLRK</sequence>
<proteinExistence type="inferred from homology"/>
<feature type="chain" id="PRO_1000143102" description="Small ribosomal subunit protein uS15">
    <location>
        <begin position="1"/>
        <end position="88"/>
    </location>
</feature>
<feature type="region of interest" description="Disordered" evidence="2">
    <location>
        <begin position="1"/>
        <end position="23"/>
    </location>
</feature>
<feature type="compositionally biased region" description="Polar residues" evidence="2">
    <location>
        <begin position="14"/>
        <end position="23"/>
    </location>
</feature>
<dbReference type="EMBL" id="CP000884">
    <property type="protein sequence ID" value="ABX37814.1"/>
    <property type="molecule type" value="Genomic_DNA"/>
</dbReference>
<dbReference type="RefSeq" id="WP_012206984.1">
    <property type="nucleotide sequence ID" value="NC_010002.1"/>
</dbReference>
<dbReference type="SMR" id="A9BNB9"/>
<dbReference type="STRING" id="398578.Daci_5185"/>
<dbReference type="GeneID" id="94690816"/>
<dbReference type="KEGG" id="dac:Daci_5185"/>
<dbReference type="eggNOG" id="COG0184">
    <property type="taxonomic scope" value="Bacteria"/>
</dbReference>
<dbReference type="HOGENOM" id="CLU_148518_0_0_4"/>
<dbReference type="Proteomes" id="UP000000784">
    <property type="component" value="Chromosome"/>
</dbReference>
<dbReference type="GO" id="GO:0022627">
    <property type="term" value="C:cytosolic small ribosomal subunit"/>
    <property type="evidence" value="ECO:0007669"/>
    <property type="project" value="TreeGrafter"/>
</dbReference>
<dbReference type="GO" id="GO:0019843">
    <property type="term" value="F:rRNA binding"/>
    <property type="evidence" value="ECO:0007669"/>
    <property type="project" value="UniProtKB-UniRule"/>
</dbReference>
<dbReference type="GO" id="GO:0003735">
    <property type="term" value="F:structural constituent of ribosome"/>
    <property type="evidence" value="ECO:0007669"/>
    <property type="project" value="InterPro"/>
</dbReference>
<dbReference type="GO" id="GO:0006412">
    <property type="term" value="P:translation"/>
    <property type="evidence" value="ECO:0007669"/>
    <property type="project" value="UniProtKB-UniRule"/>
</dbReference>
<dbReference type="CDD" id="cd00353">
    <property type="entry name" value="Ribosomal_S15p_S13e"/>
    <property type="match status" value="1"/>
</dbReference>
<dbReference type="FunFam" id="1.10.287.10:FF:000002">
    <property type="entry name" value="30S ribosomal protein S15"/>
    <property type="match status" value="1"/>
</dbReference>
<dbReference type="Gene3D" id="6.10.250.3130">
    <property type="match status" value="1"/>
</dbReference>
<dbReference type="Gene3D" id="1.10.287.10">
    <property type="entry name" value="S15/NS1, RNA-binding"/>
    <property type="match status" value="1"/>
</dbReference>
<dbReference type="HAMAP" id="MF_01343_B">
    <property type="entry name" value="Ribosomal_uS15_B"/>
    <property type="match status" value="1"/>
</dbReference>
<dbReference type="InterPro" id="IPR000589">
    <property type="entry name" value="Ribosomal_uS15"/>
</dbReference>
<dbReference type="InterPro" id="IPR005290">
    <property type="entry name" value="Ribosomal_uS15_bac-type"/>
</dbReference>
<dbReference type="InterPro" id="IPR009068">
    <property type="entry name" value="uS15_NS1_RNA-bd_sf"/>
</dbReference>
<dbReference type="NCBIfam" id="TIGR00952">
    <property type="entry name" value="S15_bact"/>
    <property type="match status" value="1"/>
</dbReference>
<dbReference type="PANTHER" id="PTHR23321">
    <property type="entry name" value="RIBOSOMAL PROTEIN S15, BACTERIAL AND ORGANELLAR"/>
    <property type="match status" value="1"/>
</dbReference>
<dbReference type="PANTHER" id="PTHR23321:SF26">
    <property type="entry name" value="SMALL RIBOSOMAL SUBUNIT PROTEIN US15M"/>
    <property type="match status" value="1"/>
</dbReference>
<dbReference type="Pfam" id="PF00312">
    <property type="entry name" value="Ribosomal_S15"/>
    <property type="match status" value="1"/>
</dbReference>
<dbReference type="SMART" id="SM01387">
    <property type="entry name" value="Ribosomal_S15"/>
    <property type="match status" value="1"/>
</dbReference>
<dbReference type="SUPFAM" id="SSF47060">
    <property type="entry name" value="S15/NS1 RNA-binding domain"/>
    <property type="match status" value="1"/>
</dbReference>
<dbReference type="PROSITE" id="PS00362">
    <property type="entry name" value="RIBOSOMAL_S15"/>
    <property type="match status" value="1"/>
</dbReference>
<keyword id="KW-1185">Reference proteome</keyword>
<keyword id="KW-0687">Ribonucleoprotein</keyword>
<keyword id="KW-0689">Ribosomal protein</keyword>
<keyword id="KW-0694">RNA-binding</keyword>
<keyword id="KW-0699">rRNA-binding</keyword>
<name>RS15_DELAS</name>
<evidence type="ECO:0000255" key="1">
    <source>
        <dbReference type="HAMAP-Rule" id="MF_01343"/>
    </source>
</evidence>
<evidence type="ECO:0000256" key="2">
    <source>
        <dbReference type="SAM" id="MobiDB-lite"/>
    </source>
</evidence>
<evidence type="ECO:0000305" key="3"/>
<comment type="function">
    <text evidence="1">One of the primary rRNA binding proteins, it binds directly to 16S rRNA where it helps nucleate assembly of the platform of the 30S subunit by binding and bridging several RNA helices of the 16S rRNA.</text>
</comment>
<comment type="function">
    <text evidence="1">Forms an intersubunit bridge (bridge B4) with the 23S rRNA of the 50S subunit in the ribosome.</text>
</comment>
<comment type="subunit">
    <text evidence="1">Part of the 30S ribosomal subunit. Forms a bridge to the 50S subunit in the 70S ribosome, contacting the 23S rRNA.</text>
</comment>
<comment type="similarity">
    <text evidence="1">Belongs to the universal ribosomal protein uS15 family.</text>
</comment>
<organism>
    <name type="scientific">Delftia acidovorans (strain DSM 14801 / SPH-1)</name>
    <dbReference type="NCBI Taxonomy" id="398578"/>
    <lineage>
        <taxon>Bacteria</taxon>
        <taxon>Pseudomonadati</taxon>
        <taxon>Pseudomonadota</taxon>
        <taxon>Betaproteobacteria</taxon>
        <taxon>Burkholderiales</taxon>
        <taxon>Comamonadaceae</taxon>
        <taxon>Delftia</taxon>
    </lineage>
</organism>
<protein>
    <recommendedName>
        <fullName evidence="1">Small ribosomal subunit protein uS15</fullName>
    </recommendedName>
    <alternativeName>
        <fullName evidence="3">30S ribosomal protein S15</fullName>
    </alternativeName>
</protein>